<reference key="1">
    <citation type="journal article" date="2011" name="J. Bacteriol.">
        <title>Complete genome sequence of the Thermophilic Bacterium Exiguobacterium sp. AT1b.</title>
        <authorList>
            <person name="Vishnivetskaya T.A."/>
            <person name="Lucas S."/>
            <person name="Copeland A."/>
            <person name="Lapidus A."/>
            <person name="Glavina del Rio T."/>
            <person name="Dalin E."/>
            <person name="Tice H."/>
            <person name="Bruce D.C."/>
            <person name="Goodwin L.A."/>
            <person name="Pitluck S."/>
            <person name="Saunders E."/>
            <person name="Brettin T."/>
            <person name="Detter C."/>
            <person name="Han C."/>
            <person name="Larimer F."/>
            <person name="Land M.L."/>
            <person name="Hauser L.J."/>
            <person name="Kyrpides N.C."/>
            <person name="Ovchinnikova G."/>
            <person name="Kathariou S."/>
            <person name="Ramaley R.F."/>
            <person name="Rodrigues D.F."/>
            <person name="Hendrix C."/>
            <person name="Richardson P."/>
            <person name="Tiedje J.M."/>
        </authorList>
    </citation>
    <scope>NUCLEOTIDE SEQUENCE [LARGE SCALE GENOMIC DNA]</scope>
    <source>
        <strain>ATCC BAA-1283 / AT1b</strain>
    </source>
</reference>
<feature type="chain" id="PRO_1000211992" description="Peptidase T">
    <location>
        <begin position="1"/>
        <end position="412"/>
    </location>
</feature>
<feature type="active site" evidence="1">
    <location>
        <position position="81"/>
    </location>
</feature>
<feature type="active site" description="Proton acceptor" evidence="1">
    <location>
        <position position="176"/>
    </location>
</feature>
<feature type="binding site" evidence="1">
    <location>
        <position position="79"/>
    </location>
    <ligand>
        <name>Zn(2+)</name>
        <dbReference type="ChEBI" id="CHEBI:29105"/>
        <label>1</label>
    </ligand>
</feature>
<feature type="binding site" evidence="1">
    <location>
        <position position="142"/>
    </location>
    <ligand>
        <name>Zn(2+)</name>
        <dbReference type="ChEBI" id="CHEBI:29105"/>
        <label>1</label>
    </ligand>
</feature>
<feature type="binding site" evidence="1">
    <location>
        <position position="142"/>
    </location>
    <ligand>
        <name>Zn(2+)</name>
        <dbReference type="ChEBI" id="CHEBI:29105"/>
        <label>2</label>
    </ligand>
</feature>
<feature type="binding site" evidence="1">
    <location>
        <position position="177"/>
    </location>
    <ligand>
        <name>Zn(2+)</name>
        <dbReference type="ChEBI" id="CHEBI:29105"/>
        <label>2</label>
    </ligand>
</feature>
<feature type="binding site" evidence="1">
    <location>
        <position position="199"/>
    </location>
    <ligand>
        <name>Zn(2+)</name>
        <dbReference type="ChEBI" id="CHEBI:29105"/>
        <label>1</label>
    </ligand>
</feature>
<feature type="binding site" evidence="1">
    <location>
        <position position="381"/>
    </location>
    <ligand>
        <name>Zn(2+)</name>
        <dbReference type="ChEBI" id="CHEBI:29105"/>
        <label>2</label>
    </ligand>
</feature>
<keyword id="KW-0031">Aminopeptidase</keyword>
<keyword id="KW-0963">Cytoplasm</keyword>
<keyword id="KW-0378">Hydrolase</keyword>
<keyword id="KW-0479">Metal-binding</keyword>
<keyword id="KW-0482">Metalloprotease</keyword>
<keyword id="KW-0645">Protease</keyword>
<keyword id="KW-0862">Zinc</keyword>
<name>PEPT_EXISA</name>
<dbReference type="EC" id="3.4.11.4" evidence="1"/>
<dbReference type="EMBL" id="CP001615">
    <property type="protein sequence ID" value="ACQ70852.1"/>
    <property type="molecule type" value="Genomic_DNA"/>
</dbReference>
<dbReference type="RefSeq" id="WP_015880411.1">
    <property type="nucleotide sequence ID" value="NC_012673.1"/>
</dbReference>
<dbReference type="SMR" id="C4L0I9"/>
<dbReference type="STRING" id="360911.EAT1b_1928"/>
<dbReference type="MEROPS" id="M20.003"/>
<dbReference type="KEGG" id="eat:EAT1b_1928"/>
<dbReference type="eggNOG" id="COG2195">
    <property type="taxonomic scope" value="Bacteria"/>
</dbReference>
<dbReference type="HOGENOM" id="CLU_053676_0_0_9"/>
<dbReference type="OrthoDB" id="9804934at2"/>
<dbReference type="Proteomes" id="UP000000716">
    <property type="component" value="Chromosome"/>
</dbReference>
<dbReference type="GO" id="GO:0005829">
    <property type="term" value="C:cytosol"/>
    <property type="evidence" value="ECO:0007669"/>
    <property type="project" value="TreeGrafter"/>
</dbReference>
<dbReference type="GO" id="GO:0008237">
    <property type="term" value="F:metallopeptidase activity"/>
    <property type="evidence" value="ECO:0007669"/>
    <property type="project" value="UniProtKB-KW"/>
</dbReference>
<dbReference type="GO" id="GO:0045148">
    <property type="term" value="F:tripeptide aminopeptidase activity"/>
    <property type="evidence" value="ECO:0007669"/>
    <property type="project" value="UniProtKB-UniRule"/>
</dbReference>
<dbReference type="GO" id="GO:0008270">
    <property type="term" value="F:zinc ion binding"/>
    <property type="evidence" value="ECO:0007669"/>
    <property type="project" value="UniProtKB-UniRule"/>
</dbReference>
<dbReference type="GO" id="GO:0043171">
    <property type="term" value="P:peptide catabolic process"/>
    <property type="evidence" value="ECO:0007669"/>
    <property type="project" value="UniProtKB-UniRule"/>
</dbReference>
<dbReference type="GO" id="GO:0006508">
    <property type="term" value="P:proteolysis"/>
    <property type="evidence" value="ECO:0007669"/>
    <property type="project" value="UniProtKB-UniRule"/>
</dbReference>
<dbReference type="CDD" id="cd03892">
    <property type="entry name" value="M20_peptT"/>
    <property type="match status" value="1"/>
</dbReference>
<dbReference type="FunFam" id="3.30.70.360:FF:000002">
    <property type="entry name" value="Peptidase T"/>
    <property type="match status" value="1"/>
</dbReference>
<dbReference type="Gene3D" id="3.30.70.360">
    <property type="match status" value="1"/>
</dbReference>
<dbReference type="Gene3D" id="3.40.630.10">
    <property type="entry name" value="Zn peptidases"/>
    <property type="match status" value="1"/>
</dbReference>
<dbReference type="HAMAP" id="MF_00550">
    <property type="entry name" value="Aminopeptidase_M20"/>
    <property type="match status" value="1"/>
</dbReference>
<dbReference type="InterPro" id="IPR001261">
    <property type="entry name" value="ArgE/DapE_CS"/>
</dbReference>
<dbReference type="InterPro" id="IPR036264">
    <property type="entry name" value="Bact_exopeptidase_dim_dom"/>
</dbReference>
<dbReference type="InterPro" id="IPR002933">
    <property type="entry name" value="Peptidase_M20"/>
</dbReference>
<dbReference type="InterPro" id="IPR011650">
    <property type="entry name" value="Peptidase_M20_dimer"/>
</dbReference>
<dbReference type="InterPro" id="IPR010161">
    <property type="entry name" value="Peptidase_M20B"/>
</dbReference>
<dbReference type="NCBIfam" id="TIGR01882">
    <property type="entry name" value="peptidase-T"/>
    <property type="match status" value="1"/>
</dbReference>
<dbReference type="NCBIfam" id="NF003976">
    <property type="entry name" value="PRK05469.1"/>
    <property type="match status" value="1"/>
</dbReference>
<dbReference type="NCBIfam" id="NF009920">
    <property type="entry name" value="PRK13381.1"/>
    <property type="match status" value="1"/>
</dbReference>
<dbReference type="PANTHER" id="PTHR42994">
    <property type="entry name" value="PEPTIDASE T"/>
    <property type="match status" value="1"/>
</dbReference>
<dbReference type="PANTHER" id="PTHR42994:SF1">
    <property type="entry name" value="PEPTIDASE T"/>
    <property type="match status" value="1"/>
</dbReference>
<dbReference type="Pfam" id="PF07687">
    <property type="entry name" value="M20_dimer"/>
    <property type="match status" value="1"/>
</dbReference>
<dbReference type="Pfam" id="PF01546">
    <property type="entry name" value="Peptidase_M20"/>
    <property type="match status" value="1"/>
</dbReference>
<dbReference type="PIRSF" id="PIRSF037215">
    <property type="entry name" value="Peptidase_M20B"/>
    <property type="match status" value="1"/>
</dbReference>
<dbReference type="SUPFAM" id="SSF55031">
    <property type="entry name" value="Bacterial exopeptidase dimerisation domain"/>
    <property type="match status" value="1"/>
</dbReference>
<dbReference type="SUPFAM" id="SSF53187">
    <property type="entry name" value="Zn-dependent exopeptidases"/>
    <property type="match status" value="1"/>
</dbReference>
<dbReference type="PROSITE" id="PS00758">
    <property type="entry name" value="ARGE_DAPE_CPG2_1"/>
    <property type="match status" value="1"/>
</dbReference>
<dbReference type="PROSITE" id="PS00759">
    <property type="entry name" value="ARGE_DAPE_CPG2_2"/>
    <property type="match status" value="1"/>
</dbReference>
<proteinExistence type="inferred from homology"/>
<evidence type="ECO:0000255" key="1">
    <source>
        <dbReference type="HAMAP-Rule" id="MF_00550"/>
    </source>
</evidence>
<accession>C4L0I9</accession>
<comment type="function">
    <text evidence="1">Cleaves the N-terminal amino acid of tripeptides.</text>
</comment>
<comment type="catalytic activity">
    <reaction evidence="1">
        <text>Release of the N-terminal residue from a tripeptide.</text>
        <dbReference type="EC" id="3.4.11.4"/>
    </reaction>
</comment>
<comment type="cofactor">
    <cofactor evidence="1">
        <name>Zn(2+)</name>
        <dbReference type="ChEBI" id="CHEBI:29105"/>
    </cofactor>
    <text evidence="1">Binds 2 Zn(2+) ions per subunit.</text>
</comment>
<comment type="subcellular location">
    <subcellularLocation>
        <location evidence="1">Cytoplasm</location>
    </subcellularLocation>
</comment>
<comment type="similarity">
    <text evidence="1">Belongs to the peptidase M20B family.</text>
</comment>
<organism>
    <name type="scientific">Exiguobacterium sp. (strain ATCC BAA-1283 / AT1b)</name>
    <dbReference type="NCBI Taxonomy" id="360911"/>
    <lineage>
        <taxon>Bacteria</taxon>
        <taxon>Bacillati</taxon>
        <taxon>Bacillota</taxon>
        <taxon>Bacilli</taxon>
        <taxon>Bacillales</taxon>
        <taxon>Bacillales Family XII. Incertae Sedis</taxon>
        <taxon>Exiguobacterium</taxon>
    </lineage>
</organism>
<protein>
    <recommendedName>
        <fullName evidence="1">Peptidase T</fullName>
        <ecNumber evidence="1">3.4.11.4</ecNumber>
    </recommendedName>
    <alternativeName>
        <fullName evidence="1">Aminotripeptidase</fullName>
        <shortName evidence="1">Tripeptidase</shortName>
    </alternativeName>
    <alternativeName>
        <fullName evidence="1">Tripeptide aminopeptidase</fullName>
    </alternativeName>
</protein>
<sequence>MQAKLIERLMTYAKIDTQSDFTSTTTPSTAKQWDLIRHLEKELKELGLTDVETDEYGYLFATLPSNVDYDVPTIGFLAHVDTATDFTGTNVSPQLVEHYEGGDIVLNESLNVVLSPKDFPELDGYVGHTLMTTDGTTLLGADDKAGIAEIVTAIEYLLAHPEIPHGPVRIAFTPDEEIGRGPHKFDVARFNADFAYTMDGGPLGELQYESFNAAGATVTFHGTNVHPGSAKNKMVNSMKLAMAFQNRLPADEAPERTSNYEGFFHLNGFNGDVEKTTLQYIIRDHDKQKFEARKALMEKLVLEWKQKYGEERIELQMEDQYYNMAEKIEPVKHIVDTVADVMRGLGIEPKIEPIRGGTDGSQLSYMGLPTPNIFTGGENYHGKFEYVSVNNMEKATTVIIETLRTFAKRAQA</sequence>
<gene>
    <name evidence="1" type="primary">pepT</name>
    <name type="ordered locus">EAT1b_1928</name>
</gene>